<sequence>MNKQQLKAYFMLMRLHRPIPILLILWPTLTALVLASHGLPDISYLVIFTIGVVVMRTVGCIINDIADVDFDKHVARTNTRPLTSGQLSIKNAIWLCISLTLVAFICVLFLNLYTILLSFVALFLAILYPFCKRFFAIPQLILGLAFNFGIFMAFSAIQNQIPVEAWIFYIATICWTIAYDTIYALADREFDLEIGIKSSAVLFGNKVFRYILLFNFLSLLLLIILGIYCDFNSFFYLGVVICSLFFVRNYFLYKKLGITNCINAFSANHWIGLIIFIIAVIQYIIKEFL</sequence>
<reference key="1">
    <citation type="journal article" date="2009" name="PLoS ONE">
        <title>Complete genome sequence of Francisella tularensis subspecies holarctica FTNF002-00.</title>
        <authorList>
            <person name="Barabote R.D."/>
            <person name="Xie G."/>
            <person name="Brettin T.S."/>
            <person name="Hinrichs S.H."/>
            <person name="Fey P.D."/>
            <person name="Jay J.J."/>
            <person name="Engle J.L."/>
            <person name="Godbole S.D."/>
            <person name="Noronha J.M."/>
            <person name="Scheuermann R.H."/>
            <person name="Zhou L.W."/>
            <person name="Lion C."/>
            <person name="Dempsey M.P."/>
        </authorList>
    </citation>
    <scope>NUCLEOTIDE SEQUENCE [LARGE SCALE GENOMIC DNA]</scope>
    <source>
        <strain>FTNF002-00 / FTA</strain>
    </source>
</reference>
<comment type="function">
    <text evidence="1">Catalyzes the prenylation of para-hydroxybenzoate (PHB) with an all-trans polyprenyl group. Mediates the second step in the final reaction sequence of ubiquinone-8 (UQ-8) biosynthesis, which is the condensation of the polyisoprenoid side chain with PHB, generating the first membrane-bound Q intermediate 3-octaprenyl-4-hydroxybenzoate.</text>
</comment>
<comment type="catalytic activity">
    <reaction evidence="1">
        <text>all-trans-octaprenyl diphosphate + 4-hydroxybenzoate = 4-hydroxy-3-(all-trans-octaprenyl)benzoate + diphosphate</text>
        <dbReference type="Rhea" id="RHEA:27782"/>
        <dbReference type="ChEBI" id="CHEBI:1617"/>
        <dbReference type="ChEBI" id="CHEBI:17879"/>
        <dbReference type="ChEBI" id="CHEBI:33019"/>
        <dbReference type="ChEBI" id="CHEBI:57711"/>
        <dbReference type="EC" id="2.5.1.39"/>
    </reaction>
</comment>
<comment type="cofactor">
    <cofactor evidence="1">
        <name>Mg(2+)</name>
        <dbReference type="ChEBI" id="CHEBI:18420"/>
    </cofactor>
</comment>
<comment type="pathway">
    <text evidence="1">Cofactor biosynthesis; ubiquinone biosynthesis.</text>
</comment>
<comment type="subcellular location">
    <subcellularLocation>
        <location evidence="1">Cell inner membrane</location>
        <topology evidence="1">Multi-pass membrane protein</topology>
    </subcellularLocation>
</comment>
<comment type="similarity">
    <text evidence="1">Belongs to the UbiA prenyltransferase family.</text>
</comment>
<dbReference type="EC" id="2.5.1.39" evidence="1"/>
<dbReference type="EMBL" id="CP000803">
    <property type="protein sequence ID" value="ABU60853.1"/>
    <property type="molecule type" value="Genomic_DNA"/>
</dbReference>
<dbReference type="RefSeq" id="WP_003026559.1">
    <property type="nucleotide sequence ID" value="NC_009749.1"/>
</dbReference>
<dbReference type="SMR" id="A7NA50"/>
<dbReference type="KEGG" id="fta:FTA_0376"/>
<dbReference type="HOGENOM" id="CLU_034879_1_0_6"/>
<dbReference type="UniPathway" id="UPA00232"/>
<dbReference type="GO" id="GO:0005886">
    <property type="term" value="C:plasma membrane"/>
    <property type="evidence" value="ECO:0007669"/>
    <property type="project" value="UniProtKB-SubCell"/>
</dbReference>
<dbReference type="GO" id="GO:0008412">
    <property type="term" value="F:4-hydroxybenzoate polyprenyltransferase activity"/>
    <property type="evidence" value="ECO:0007669"/>
    <property type="project" value="UniProtKB-UniRule"/>
</dbReference>
<dbReference type="GO" id="GO:0006744">
    <property type="term" value="P:ubiquinone biosynthetic process"/>
    <property type="evidence" value="ECO:0007669"/>
    <property type="project" value="UniProtKB-UniRule"/>
</dbReference>
<dbReference type="CDD" id="cd13959">
    <property type="entry name" value="PT_UbiA_COQ2"/>
    <property type="match status" value="1"/>
</dbReference>
<dbReference type="FunFam" id="1.10.357.140:FF:000008">
    <property type="entry name" value="4-hydroxybenzoate octaprenyltransferase"/>
    <property type="match status" value="1"/>
</dbReference>
<dbReference type="FunFam" id="1.20.120.1780:FF:000001">
    <property type="entry name" value="4-hydroxybenzoate octaprenyltransferase"/>
    <property type="match status" value="1"/>
</dbReference>
<dbReference type="Gene3D" id="1.10.357.140">
    <property type="entry name" value="UbiA prenyltransferase"/>
    <property type="match status" value="1"/>
</dbReference>
<dbReference type="Gene3D" id="1.20.120.1780">
    <property type="entry name" value="UbiA prenyltransferase"/>
    <property type="match status" value="1"/>
</dbReference>
<dbReference type="HAMAP" id="MF_01635">
    <property type="entry name" value="UbiA"/>
    <property type="match status" value="1"/>
</dbReference>
<dbReference type="InterPro" id="IPR006370">
    <property type="entry name" value="HB_polyprenyltransferase-like"/>
</dbReference>
<dbReference type="InterPro" id="IPR039653">
    <property type="entry name" value="Prenyltransferase"/>
</dbReference>
<dbReference type="InterPro" id="IPR000537">
    <property type="entry name" value="UbiA_prenyltransferase"/>
</dbReference>
<dbReference type="InterPro" id="IPR030470">
    <property type="entry name" value="UbiA_prenylTrfase_CS"/>
</dbReference>
<dbReference type="InterPro" id="IPR044878">
    <property type="entry name" value="UbiA_sf"/>
</dbReference>
<dbReference type="NCBIfam" id="TIGR01474">
    <property type="entry name" value="ubiA_proteo"/>
    <property type="match status" value="1"/>
</dbReference>
<dbReference type="PANTHER" id="PTHR11048:SF28">
    <property type="entry name" value="4-HYDROXYBENZOATE POLYPRENYLTRANSFERASE, MITOCHONDRIAL"/>
    <property type="match status" value="1"/>
</dbReference>
<dbReference type="PANTHER" id="PTHR11048">
    <property type="entry name" value="PRENYLTRANSFERASES"/>
    <property type="match status" value="1"/>
</dbReference>
<dbReference type="Pfam" id="PF01040">
    <property type="entry name" value="UbiA"/>
    <property type="match status" value="1"/>
</dbReference>
<dbReference type="PROSITE" id="PS00943">
    <property type="entry name" value="UBIA"/>
    <property type="match status" value="1"/>
</dbReference>
<name>UBIA_FRATF</name>
<feature type="chain" id="PRO_1000069820" description="4-hydroxybenzoate octaprenyltransferase">
    <location>
        <begin position="1"/>
        <end position="289"/>
    </location>
</feature>
<feature type="transmembrane region" description="Helical" evidence="1">
    <location>
        <begin position="19"/>
        <end position="39"/>
    </location>
</feature>
<feature type="transmembrane region" description="Helical" evidence="1">
    <location>
        <begin position="42"/>
        <end position="62"/>
    </location>
</feature>
<feature type="transmembrane region" description="Helical" evidence="1">
    <location>
        <begin position="85"/>
        <end position="105"/>
    </location>
</feature>
<feature type="transmembrane region" description="Helical" evidence="1">
    <location>
        <begin position="107"/>
        <end position="127"/>
    </location>
</feature>
<feature type="transmembrane region" description="Helical" evidence="1">
    <location>
        <begin position="134"/>
        <end position="154"/>
    </location>
</feature>
<feature type="transmembrane region" description="Helical" evidence="1">
    <location>
        <begin position="165"/>
        <end position="185"/>
    </location>
</feature>
<feature type="transmembrane region" description="Helical" evidence="1">
    <location>
        <begin position="211"/>
        <end position="231"/>
    </location>
</feature>
<feature type="transmembrane region" description="Helical" evidence="1">
    <location>
        <begin position="233"/>
        <end position="253"/>
    </location>
</feature>
<feature type="transmembrane region" description="Helical" evidence="1">
    <location>
        <begin position="265"/>
        <end position="285"/>
    </location>
</feature>
<accession>A7NA50</accession>
<evidence type="ECO:0000255" key="1">
    <source>
        <dbReference type="HAMAP-Rule" id="MF_01635"/>
    </source>
</evidence>
<proteinExistence type="inferred from homology"/>
<protein>
    <recommendedName>
        <fullName evidence="1">4-hydroxybenzoate octaprenyltransferase</fullName>
        <ecNumber evidence="1">2.5.1.39</ecNumber>
    </recommendedName>
    <alternativeName>
        <fullName evidence="1">4-HB polyprenyltransferase</fullName>
    </alternativeName>
</protein>
<keyword id="KW-0997">Cell inner membrane</keyword>
<keyword id="KW-1003">Cell membrane</keyword>
<keyword id="KW-0460">Magnesium</keyword>
<keyword id="KW-0472">Membrane</keyword>
<keyword id="KW-0808">Transferase</keyword>
<keyword id="KW-0812">Transmembrane</keyword>
<keyword id="KW-1133">Transmembrane helix</keyword>
<keyword id="KW-0831">Ubiquinone biosynthesis</keyword>
<gene>
    <name evidence="1" type="primary">ubiA</name>
    <name type="ordered locus">FTA_0376</name>
</gene>
<organism>
    <name type="scientific">Francisella tularensis subsp. holarctica (strain FTNF002-00 / FTA)</name>
    <dbReference type="NCBI Taxonomy" id="458234"/>
    <lineage>
        <taxon>Bacteria</taxon>
        <taxon>Pseudomonadati</taxon>
        <taxon>Pseudomonadota</taxon>
        <taxon>Gammaproteobacteria</taxon>
        <taxon>Thiotrichales</taxon>
        <taxon>Francisellaceae</taxon>
        <taxon>Francisella</taxon>
    </lineage>
</organism>